<protein>
    <recommendedName>
        <fullName>Indolethylamine N-methyltransferase</fullName>
        <shortName>Indolamine N-methyltransferase</shortName>
        <ecNumber>2.1.1.49</ecNumber>
        <ecNumber>2.1.1.96</ecNumber>
    </recommendedName>
    <alternativeName>
        <fullName>Aromatic alkylamine N-methyltransferase</fullName>
        <shortName>Amine N-methyltransferase</shortName>
        <shortName>Arylamine N-methyltransferase</shortName>
    </alternativeName>
    <alternativeName>
        <fullName>Thioether S-methyltransferase</fullName>
        <shortName>TEMT</shortName>
    </alternativeName>
</protein>
<feature type="chain" id="PRO_0000159713" description="Indolethylamine N-methyltransferase">
    <location>
        <begin position="1"/>
        <end position="264"/>
    </location>
</feature>
<feature type="binding site" evidence="1">
    <location>
        <position position="21"/>
    </location>
    <ligand>
        <name>S-adenosyl-L-methionine</name>
        <dbReference type="ChEBI" id="CHEBI:59789"/>
    </ligand>
</feature>
<feature type="binding site" evidence="1">
    <location>
        <position position="26"/>
    </location>
    <ligand>
        <name>S-adenosyl-L-methionine</name>
        <dbReference type="ChEBI" id="CHEBI:59789"/>
    </ligand>
</feature>
<feature type="binding site" evidence="1">
    <location>
        <begin position="64"/>
        <end position="65"/>
    </location>
    <ligand>
        <name>S-adenosyl-L-methionine</name>
        <dbReference type="ChEBI" id="CHEBI:59789"/>
    </ligand>
</feature>
<feature type="binding site" evidence="1">
    <location>
        <position position="70"/>
    </location>
    <ligand>
        <name>S-adenosyl-L-methionine</name>
        <dbReference type="ChEBI" id="CHEBI:59789"/>
    </ligand>
</feature>
<feature type="binding site" evidence="1">
    <location>
        <position position="86"/>
    </location>
    <ligand>
        <name>S-adenosyl-L-methionine</name>
        <dbReference type="ChEBI" id="CHEBI:59789"/>
    </ligand>
</feature>
<feature type="binding site" evidence="1">
    <location>
        <position position="91"/>
    </location>
    <ligand>
        <name>S-adenosyl-L-methionine</name>
        <dbReference type="ChEBI" id="CHEBI:59789"/>
    </ligand>
</feature>
<feature type="binding site" evidence="1">
    <location>
        <begin position="143"/>
        <end position="144"/>
    </location>
    <ligand>
        <name>S-adenosyl-L-methionine</name>
        <dbReference type="ChEBI" id="CHEBI:59789"/>
    </ligand>
</feature>
<feature type="binding site" evidence="1">
    <location>
        <position position="164"/>
    </location>
    <ligand>
        <name>S-adenosyl-L-methionine</name>
        <dbReference type="ChEBI" id="CHEBI:59789"/>
    </ligand>
</feature>
<feature type="modified residue" description="N6-succinyllysine" evidence="5">
    <location>
        <position position="14"/>
    </location>
</feature>
<feature type="modified residue" description="N6-succinyllysine" evidence="5">
    <location>
        <position position="97"/>
    </location>
</feature>
<feature type="sequence conflict" description="In Ref. 2; BAB28594." evidence="3" ref="2">
    <original>L</original>
    <variation>M</variation>
    <location>
        <position position="92"/>
    </location>
</feature>
<reference key="1">
    <citation type="journal article" date="1995" name="Biochim. Biophys. Acta">
        <title>Cloning and base sequence analysis of a cDNA encoding mouse lung thioether S-methyltransferase.</title>
        <authorList>
            <person name="Warner D.R."/>
            <person name="Mozier N.M."/>
            <person name="Pearson J.D."/>
            <person name="Hoffman J.L."/>
        </authorList>
    </citation>
    <scope>NUCLEOTIDE SEQUENCE [MRNA]</scope>
    <scope>PARTIAL PROTEIN SEQUENCE</scope>
    <source>
        <tissue>Lung</tissue>
    </source>
</reference>
<reference key="2">
    <citation type="journal article" date="2005" name="Science">
        <title>The transcriptional landscape of the mammalian genome.</title>
        <authorList>
            <person name="Carninci P."/>
            <person name="Kasukawa T."/>
            <person name="Katayama S."/>
            <person name="Gough J."/>
            <person name="Frith M.C."/>
            <person name="Maeda N."/>
            <person name="Oyama R."/>
            <person name="Ravasi T."/>
            <person name="Lenhard B."/>
            <person name="Wells C."/>
            <person name="Kodzius R."/>
            <person name="Shimokawa K."/>
            <person name="Bajic V.B."/>
            <person name="Brenner S.E."/>
            <person name="Batalov S."/>
            <person name="Forrest A.R."/>
            <person name="Zavolan M."/>
            <person name="Davis M.J."/>
            <person name="Wilming L.G."/>
            <person name="Aidinis V."/>
            <person name="Allen J.E."/>
            <person name="Ambesi-Impiombato A."/>
            <person name="Apweiler R."/>
            <person name="Aturaliya R.N."/>
            <person name="Bailey T.L."/>
            <person name="Bansal M."/>
            <person name="Baxter L."/>
            <person name="Beisel K.W."/>
            <person name="Bersano T."/>
            <person name="Bono H."/>
            <person name="Chalk A.M."/>
            <person name="Chiu K.P."/>
            <person name="Choudhary V."/>
            <person name="Christoffels A."/>
            <person name="Clutterbuck D.R."/>
            <person name="Crowe M.L."/>
            <person name="Dalla E."/>
            <person name="Dalrymple B.P."/>
            <person name="de Bono B."/>
            <person name="Della Gatta G."/>
            <person name="di Bernardo D."/>
            <person name="Down T."/>
            <person name="Engstrom P."/>
            <person name="Fagiolini M."/>
            <person name="Faulkner G."/>
            <person name="Fletcher C.F."/>
            <person name="Fukushima T."/>
            <person name="Furuno M."/>
            <person name="Futaki S."/>
            <person name="Gariboldi M."/>
            <person name="Georgii-Hemming P."/>
            <person name="Gingeras T.R."/>
            <person name="Gojobori T."/>
            <person name="Green R.E."/>
            <person name="Gustincich S."/>
            <person name="Harbers M."/>
            <person name="Hayashi Y."/>
            <person name="Hensch T.K."/>
            <person name="Hirokawa N."/>
            <person name="Hill D."/>
            <person name="Huminiecki L."/>
            <person name="Iacono M."/>
            <person name="Ikeo K."/>
            <person name="Iwama A."/>
            <person name="Ishikawa T."/>
            <person name="Jakt M."/>
            <person name="Kanapin A."/>
            <person name="Katoh M."/>
            <person name="Kawasawa Y."/>
            <person name="Kelso J."/>
            <person name="Kitamura H."/>
            <person name="Kitano H."/>
            <person name="Kollias G."/>
            <person name="Krishnan S.P."/>
            <person name="Kruger A."/>
            <person name="Kummerfeld S.K."/>
            <person name="Kurochkin I.V."/>
            <person name="Lareau L.F."/>
            <person name="Lazarevic D."/>
            <person name="Lipovich L."/>
            <person name="Liu J."/>
            <person name="Liuni S."/>
            <person name="McWilliam S."/>
            <person name="Madan Babu M."/>
            <person name="Madera M."/>
            <person name="Marchionni L."/>
            <person name="Matsuda H."/>
            <person name="Matsuzawa S."/>
            <person name="Miki H."/>
            <person name="Mignone F."/>
            <person name="Miyake S."/>
            <person name="Morris K."/>
            <person name="Mottagui-Tabar S."/>
            <person name="Mulder N."/>
            <person name="Nakano N."/>
            <person name="Nakauchi H."/>
            <person name="Ng P."/>
            <person name="Nilsson R."/>
            <person name="Nishiguchi S."/>
            <person name="Nishikawa S."/>
            <person name="Nori F."/>
            <person name="Ohara O."/>
            <person name="Okazaki Y."/>
            <person name="Orlando V."/>
            <person name="Pang K.C."/>
            <person name="Pavan W.J."/>
            <person name="Pavesi G."/>
            <person name="Pesole G."/>
            <person name="Petrovsky N."/>
            <person name="Piazza S."/>
            <person name="Reed J."/>
            <person name="Reid J.F."/>
            <person name="Ring B.Z."/>
            <person name="Ringwald M."/>
            <person name="Rost B."/>
            <person name="Ruan Y."/>
            <person name="Salzberg S.L."/>
            <person name="Sandelin A."/>
            <person name="Schneider C."/>
            <person name="Schoenbach C."/>
            <person name="Sekiguchi K."/>
            <person name="Semple C.A."/>
            <person name="Seno S."/>
            <person name="Sessa L."/>
            <person name="Sheng Y."/>
            <person name="Shibata Y."/>
            <person name="Shimada H."/>
            <person name="Shimada K."/>
            <person name="Silva D."/>
            <person name="Sinclair B."/>
            <person name="Sperling S."/>
            <person name="Stupka E."/>
            <person name="Sugiura K."/>
            <person name="Sultana R."/>
            <person name="Takenaka Y."/>
            <person name="Taki K."/>
            <person name="Tammoja K."/>
            <person name="Tan S.L."/>
            <person name="Tang S."/>
            <person name="Taylor M.S."/>
            <person name="Tegner J."/>
            <person name="Teichmann S.A."/>
            <person name="Ueda H.R."/>
            <person name="van Nimwegen E."/>
            <person name="Verardo R."/>
            <person name="Wei C.L."/>
            <person name="Yagi K."/>
            <person name="Yamanishi H."/>
            <person name="Zabarovsky E."/>
            <person name="Zhu S."/>
            <person name="Zimmer A."/>
            <person name="Hide W."/>
            <person name="Bult C."/>
            <person name="Grimmond S.M."/>
            <person name="Teasdale R.D."/>
            <person name="Liu E.T."/>
            <person name="Brusic V."/>
            <person name="Quackenbush J."/>
            <person name="Wahlestedt C."/>
            <person name="Mattick J.S."/>
            <person name="Hume D.A."/>
            <person name="Kai C."/>
            <person name="Sasaki D."/>
            <person name="Tomaru Y."/>
            <person name="Fukuda S."/>
            <person name="Kanamori-Katayama M."/>
            <person name="Suzuki M."/>
            <person name="Aoki J."/>
            <person name="Arakawa T."/>
            <person name="Iida J."/>
            <person name="Imamura K."/>
            <person name="Itoh M."/>
            <person name="Kato T."/>
            <person name="Kawaji H."/>
            <person name="Kawagashira N."/>
            <person name="Kawashima T."/>
            <person name="Kojima M."/>
            <person name="Kondo S."/>
            <person name="Konno H."/>
            <person name="Nakano K."/>
            <person name="Ninomiya N."/>
            <person name="Nishio T."/>
            <person name="Okada M."/>
            <person name="Plessy C."/>
            <person name="Shibata K."/>
            <person name="Shiraki T."/>
            <person name="Suzuki S."/>
            <person name="Tagami M."/>
            <person name="Waki K."/>
            <person name="Watahiki A."/>
            <person name="Okamura-Oho Y."/>
            <person name="Suzuki H."/>
            <person name="Kawai J."/>
            <person name="Hayashizaki Y."/>
        </authorList>
    </citation>
    <scope>NUCLEOTIDE SEQUENCE [LARGE SCALE MRNA]</scope>
    <source>
        <strain>C57BL/6J</strain>
        <tissue>Embryo</tissue>
        <tissue>Kidney</tissue>
    </source>
</reference>
<reference key="3">
    <citation type="journal article" date="2004" name="Genome Res.">
        <title>The status, quality, and expansion of the NIH full-length cDNA project: the Mammalian Gene Collection (MGC).</title>
        <authorList>
            <consortium name="The MGC Project Team"/>
        </authorList>
    </citation>
    <scope>NUCLEOTIDE SEQUENCE [LARGE SCALE MRNA]</scope>
    <source>
        <strain>FVB/N</strain>
        <tissue>Kidney</tissue>
    </source>
</reference>
<reference key="4">
    <citation type="journal article" date="1988" name="J. Biol. Chem.">
        <title>S-adenosyl-L-methionine:thioether S-methyltransferase, a new enzyme in sulfur and selenium metabolism.</title>
        <authorList>
            <person name="Mozier N.M."/>
            <person name="McConnell K.P."/>
            <person name="Hoffman J.L."/>
        </authorList>
    </citation>
    <scope>CATALYTIC ACTIVITY</scope>
    <scope>FUNCTION</scope>
    <scope>SUBUNIT</scope>
    <scope>SUBCELLULAR LOCATION</scope>
    <scope>ACTIVITY REGULATION</scope>
    <scope>TISSUE SPECIFICITY</scope>
</reference>
<reference key="5">
    <citation type="journal article" date="2010" name="Cell">
        <title>A tissue-specific atlas of mouse protein phosphorylation and expression.</title>
        <authorList>
            <person name="Huttlin E.L."/>
            <person name="Jedrychowski M.P."/>
            <person name="Elias J.E."/>
            <person name="Goswami T."/>
            <person name="Rad R."/>
            <person name="Beausoleil S.A."/>
            <person name="Villen J."/>
            <person name="Haas W."/>
            <person name="Sowa M.E."/>
            <person name="Gygi S.P."/>
        </authorList>
    </citation>
    <scope>IDENTIFICATION BY MASS SPECTROMETRY [LARGE SCALE ANALYSIS]</scope>
    <source>
        <tissue>Kidney</tissue>
        <tissue>Liver</tissue>
        <tissue>Lung</tissue>
        <tissue>Pancreas</tissue>
    </source>
</reference>
<reference key="6">
    <citation type="journal article" date="2013" name="Mol. Cell">
        <title>SIRT5-mediated lysine desuccinylation impacts diverse metabolic pathways.</title>
        <authorList>
            <person name="Park J."/>
            <person name="Chen Y."/>
            <person name="Tishkoff D.X."/>
            <person name="Peng C."/>
            <person name="Tan M."/>
            <person name="Dai L."/>
            <person name="Xie Z."/>
            <person name="Zhang Y."/>
            <person name="Zwaans B.M."/>
            <person name="Skinner M.E."/>
            <person name="Lombard D.B."/>
            <person name="Zhao Y."/>
        </authorList>
    </citation>
    <scope>SUCCINYLATION [LARGE SCALE ANALYSIS] AT LYS-14 AND LYS-97</scope>
    <scope>IDENTIFICATION BY MASS SPECTROMETRY [LARGE SCALE ANALYSIS]</scope>
    <source>
        <tissue>Liver</tissue>
    </source>
</reference>
<organism>
    <name type="scientific">Mus musculus</name>
    <name type="common">Mouse</name>
    <dbReference type="NCBI Taxonomy" id="10090"/>
    <lineage>
        <taxon>Eukaryota</taxon>
        <taxon>Metazoa</taxon>
        <taxon>Chordata</taxon>
        <taxon>Craniata</taxon>
        <taxon>Vertebrata</taxon>
        <taxon>Euteleostomi</taxon>
        <taxon>Mammalia</taxon>
        <taxon>Eutheria</taxon>
        <taxon>Euarchontoglires</taxon>
        <taxon>Glires</taxon>
        <taxon>Rodentia</taxon>
        <taxon>Myomorpha</taxon>
        <taxon>Muroidea</taxon>
        <taxon>Muridae</taxon>
        <taxon>Murinae</taxon>
        <taxon>Mus</taxon>
        <taxon>Mus</taxon>
    </lineage>
</organism>
<sequence length="264" mass="29460">MEGKVYIGGEDYEKEFTPKDYLTTYYSFHSGPVAEQEIVKFSLQNLYQTFSTGGVGGDVLIDIGSGPTIYQLLSACEVFREIIVTDYTPQNLQELQKWLKKEPGAYDWSSIVQHACELEGDRSRWQEKEAKLRRTVTRVLRCDVTKTPPLGSAQVPLADCVLTFLAMECACPDIDTYRAALRRLAGLLKPGGHLVTLVTLRFQHYMVGPKKFSGVYLEKEVVEKAIQDAGCQVLKCNCVSLSYSEAYCSHDGLCFVVARKGPSA</sequence>
<proteinExistence type="evidence at protein level"/>
<comment type="function">
    <text evidence="1 2">Catalyzes the N-methylation of tryptamine and structurally related compounds (By similarity). Functions as a thioether S-methyltransferase and is active with a variety of thioethers and the corresponding selenium and tellurium compounds, including 3-methylthiopropionaldehyde, dimethyl selenide, dimethyl telluride, 2-methylthioethylamine, 2-methylthioethanol, methyl-n-propyl sulfide and diethyl sulfide. Plays an important role in the detoxification of selenium compounds.</text>
</comment>
<comment type="catalytic activity">
    <reaction evidence="2">
        <text>a tertiary amine + S-adenosyl-L-methionine = a methylated tertiary amine + S-adenosyl-L-homocysteine + H(+)</text>
        <dbReference type="Rhea" id="RHEA:53928"/>
        <dbReference type="ChEBI" id="CHEBI:15378"/>
        <dbReference type="ChEBI" id="CHEBI:57856"/>
        <dbReference type="ChEBI" id="CHEBI:59789"/>
        <dbReference type="ChEBI" id="CHEBI:137982"/>
        <dbReference type="ChEBI" id="CHEBI:137983"/>
        <dbReference type="EC" id="2.1.1.49"/>
    </reaction>
</comment>
<comment type="catalytic activity">
    <reaction evidence="2">
        <text>a secondary amine + S-adenosyl-L-methionine = a methylated secondary amine + S-adenosyl-L-homocysteine + H(+)</text>
        <dbReference type="Rhea" id="RHEA:53924"/>
        <dbReference type="ChEBI" id="CHEBI:15378"/>
        <dbReference type="ChEBI" id="CHEBI:57856"/>
        <dbReference type="ChEBI" id="CHEBI:59789"/>
        <dbReference type="ChEBI" id="CHEBI:137419"/>
        <dbReference type="ChEBI" id="CHEBI:137984"/>
        <dbReference type="EC" id="2.1.1.49"/>
    </reaction>
</comment>
<comment type="catalytic activity">
    <reaction evidence="2">
        <text>a primary amine + S-adenosyl-L-methionine = a methylated primary amine + S-adenosyl-L-homocysteine + H(+)</text>
        <dbReference type="Rhea" id="RHEA:23136"/>
        <dbReference type="ChEBI" id="CHEBI:15378"/>
        <dbReference type="ChEBI" id="CHEBI:57856"/>
        <dbReference type="ChEBI" id="CHEBI:59789"/>
        <dbReference type="ChEBI" id="CHEBI:65296"/>
        <dbReference type="ChEBI" id="CHEBI:131823"/>
        <dbReference type="EC" id="2.1.1.49"/>
    </reaction>
</comment>
<comment type="catalytic activity">
    <reaction evidence="2">
        <text>dimethyl sulfide + S-adenosyl-L-methionine = trimethylsulfonium + S-adenosyl-L-homocysteine</text>
        <dbReference type="Rhea" id="RHEA:19613"/>
        <dbReference type="ChEBI" id="CHEBI:17434"/>
        <dbReference type="ChEBI" id="CHEBI:17437"/>
        <dbReference type="ChEBI" id="CHEBI:57856"/>
        <dbReference type="ChEBI" id="CHEBI:59789"/>
        <dbReference type="EC" id="2.1.1.96"/>
    </reaction>
</comment>
<comment type="activity regulation">
    <text evidence="2">Inhibited by the S-adenosyl-L-methionine analog sinefungin and by the product S-adenosyl-L-homocysteine.</text>
</comment>
<comment type="biophysicochemical properties">
    <kinetics>
        <KM>0.4 uM for dimethyl selenide</KM>
        <KM>1 uM for dimethyl sulfide</KM>
        <KM>1 uM for S-adenosyl-L-methionine</KM>
    </kinetics>
    <phDependence>
        <text>Optimum pH is 6.3.</text>
    </phDependence>
</comment>
<comment type="subunit">
    <text evidence="2">Monomer.</text>
</comment>
<comment type="subcellular location">
    <subcellularLocation>
        <location evidence="2">Cytoplasm</location>
    </subcellularLocation>
</comment>
<comment type="tissue specificity">
    <text evidence="2">Detected in lung and liver (at protein level).</text>
</comment>
<comment type="similarity">
    <text evidence="3">Belongs to the class I-like SAM-binding methyltransferase superfamily. NNMT/PNMT/TEMT family.</text>
</comment>
<comment type="caution">
    <text evidence="4">Was originally thought to be a thioether S-methyltransferase but appears to be the ortholog of human INMT.</text>
</comment>
<gene>
    <name type="primary">Inmt</name>
    <name type="synonym">Temt</name>
</gene>
<dbReference type="EC" id="2.1.1.49"/>
<dbReference type="EC" id="2.1.1.96"/>
<dbReference type="EMBL" id="M88694">
    <property type="protein sequence ID" value="AAA62365.1"/>
    <property type="molecule type" value="mRNA"/>
</dbReference>
<dbReference type="EMBL" id="AK002281">
    <property type="protein sequence ID" value="BAB21985.1"/>
    <property type="molecule type" value="mRNA"/>
</dbReference>
<dbReference type="EMBL" id="AK013010">
    <property type="protein sequence ID" value="BAB28594.1"/>
    <property type="molecule type" value="mRNA"/>
</dbReference>
<dbReference type="EMBL" id="BC013518">
    <property type="protein sequence ID" value="AAH13518.1"/>
    <property type="molecule type" value="mRNA"/>
</dbReference>
<dbReference type="CCDS" id="CCDS20163.1"/>
<dbReference type="PIR" id="S52102">
    <property type="entry name" value="S52102"/>
</dbReference>
<dbReference type="RefSeq" id="NP_033375.1">
    <property type="nucleotide sequence ID" value="NM_009349.3"/>
</dbReference>
<dbReference type="SMR" id="P40936"/>
<dbReference type="BioGRID" id="204112">
    <property type="interactions" value="1"/>
</dbReference>
<dbReference type="FunCoup" id="P40936">
    <property type="interactions" value="346"/>
</dbReference>
<dbReference type="IntAct" id="P40936">
    <property type="interactions" value="2"/>
</dbReference>
<dbReference type="MINT" id="P40936"/>
<dbReference type="STRING" id="10090.ENSMUSP00000003569"/>
<dbReference type="GlyGen" id="P40936">
    <property type="glycosylation" value="1 site, 1 O-linked glycan (1 site)"/>
</dbReference>
<dbReference type="iPTMnet" id="P40936"/>
<dbReference type="PhosphoSitePlus" id="P40936"/>
<dbReference type="SwissPalm" id="P40936"/>
<dbReference type="jPOST" id="P40936"/>
<dbReference type="PaxDb" id="10090-ENSMUSP00000003569"/>
<dbReference type="PeptideAtlas" id="P40936"/>
<dbReference type="ProteomicsDB" id="267338"/>
<dbReference type="DNASU" id="21743"/>
<dbReference type="Ensembl" id="ENSMUST00000003569.6">
    <property type="protein sequence ID" value="ENSMUSP00000003569.6"/>
    <property type="gene ID" value="ENSMUSG00000003477.6"/>
</dbReference>
<dbReference type="GeneID" id="21743"/>
<dbReference type="KEGG" id="mmu:21743"/>
<dbReference type="UCSC" id="uc009can.1">
    <property type="organism name" value="mouse"/>
</dbReference>
<dbReference type="AGR" id="MGI:102963"/>
<dbReference type="CTD" id="11185"/>
<dbReference type="MGI" id="MGI:102963">
    <property type="gene designation" value="Inmt"/>
</dbReference>
<dbReference type="VEuPathDB" id="HostDB:ENSMUSG00000003477"/>
<dbReference type="eggNOG" id="KOG4564">
    <property type="taxonomic scope" value="Eukaryota"/>
</dbReference>
<dbReference type="GeneTree" id="ENSGT00390000011708"/>
<dbReference type="HOGENOM" id="CLU_082526_1_1_1"/>
<dbReference type="InParanoid" id="P40936"/>
<dbReference type="OMA" id="RSQHYMV"/>
<dbReference type="OrthoDB" id="10050085at2759"/>
<dbReference type="PhylomeDB" id="P40936"/>
<dbReference type="TreeFam" id="TF313114"/>
<dbReference type="BRENDA" id="2.1.1.96">
    <property type="organism ID" value="3474"/>
</dbReference>
<dbReference type="BioGRID-ORCS" id="21743">
    <property type="hits" value="1 hit in 79 CRISPR screens"/>
</dbReference>
<dbReference type="PRO" id="PR:P40936"/>
<dbReference type="Proteomes" id="UP000000589">
    <property type="component" value="Chromosome 6"/>
</dbReference>
<dbReference type="RNAct" id="P40936">
    <property type="molecule type" value="protein"/>
</dbReference>
<dbReference type="Bgee" id="ENSMUSG00000003477">
    <property type="expression patterns" value="Expressed in right lung lobe and 146 other cell types or tissues"/>
</dbReference>
<dbReference type="GO" id="GO:0005829">
    <property type="term" value="C:cytosol"/>
    <property type="evidence" value="ECO:0000314"/>
    <property type="project" value="MGI"/>
</dbReference>
<dbReference type="GO" id="GO:0030748">
    <property type="term" value="F:amine N-methyltransferase activity"/>
    <property type="evidence" value="ECO:0000250"/>
    <property type="project" value="UniProtKB"/>
</dbReference>
<dbReference type="GO" id="GO:0098615">
    <property type="term" value="F:dimethyl selenide methyltransferase activity"/>
    <property type="evidence" value="ECO:0000304"/>
    <property type="project" value="Reactome"/>
</dbReference>
<dbReference type="GO" id="GO:0004790">
    <property type="term" value="F:thioether S-methyltransferase activity"/>
    <property type="evidence" value="ECO:0000314"/>
    <property type="project" value="MGI"/>
</dbReference>
<dbReference type="GO" id="GO:0009308">
    <property type="term" value="P:amine metabolic process"/>
    <property type="evidence" value="ECO:0000250"/>
    <property type="project" value="UniProtKB"/>
</dbReference>
<dbReference type="GO" id="GO:0032259">
    <property type="term" value="P:methylation"/>
    <property type="evidence" value="ECO:0000250"/>
    <property type="project" value="UniProtKB"/>
</dbReference>
<dbReference type="GO" id="GO:0009636">
    <property type="term" value="P:response to toxic substance"/>
    <property type="evidence" value="ECO:0007669"/>
    <property type="project" value="UniProtKB-KW"/>
</dbReference>
<dbReference type="CDD" id="cd02440">
    <property type="entry name" value="AdoMet_MTases"/>
    <property type="match status" value="1"/>
</dbReference>
<dbReference type="FunFam" id="3.40.50.150:FF:000065">
    <property type="entry name" value="Phenylethanolamine N-methyltransferase"/>
    <property type="match status" value="1"/>
</dbReference>
<dbReference type="Gene3D" id="3.40.50.150">
    <property type="entry name" value="Vaccinia Virus protein VP39"/>
    <property type="match status" value="1"/>
</dbReference>
<dbReference type="InterPro" id="IPR025820">
    <property type="entry name" value="NNMT/PNMT/TEMT_CS"/>
</dbReference>
<dbReference type="InterPro" id="IPR000940">
    <property type="entry name" value="NNMT_TEMT_trans"/>
</dbReference>
<dbReference type="InterPro" id="IPR053384">
    <property type="entry name" value="SAM-dep_methyltransferase"/>
</dbReference>
<dbReference type="InterPro" id="IPR029063">
    <property type="entry name" value="SAM-dependent_MTases_sf"/>
</dbReference>
<dbReference type="NCBIfam" id="NF041360">
    <property type="entry name" value="GntF_guanitoxin"/>
    <property type="match status" value="1"/>
</dbReference>
<dbReference type="PANTHER" id="PTHR10867:SF33">
    <property type="entry name" value="INDOLETHYLAMINE N-METHYLTRANSFERASE"/>
    <property type="match status" value="1"/>
</dbReference>
<dbReference type="PANTHER" id="PTHR10867">
    <property type="entry name" value="NNMT/PNMT/TEMT FAMILY MEMBER"/>
    <property type="match status" value="1"/>
</dbReference>
<dbReference type="Pfam" id="PF01234">
    <property type="entry name" value="NNMT_PNMT_TEMT"/>
    <property type="match status" value="1"/>
</dbReference>
<dbReference type="PIRSF" id="PIRSF000384">
    <property type="entry name" value="PNMTase"/>
    <property type="match status" value="1"/>
</dbReference>
<dbReference type="SUPFAM" id="SSF53335">
    <property type="entry name" value="S-adenosyl-L-methionine-dependent methyltransferases"/>
    <property type="match status" value="1"/>
</dbReference>
<dbReference type="PROSITE" id="PS01100">
    <property type="entry name" value="NNMT_PNMT_TEMT"/>
    <property type="match status" value="1"/>
</dbReference>
<dbReference type="PROSITE" id="PS51681">
    <property type="entry name" value="SAM_MT_NNMT_PNMT_TEMT"/>
    <property type="match status" value="1"/>
</dbReference>
<keyword id="KW-0963">Cytoplasm</keyword>
<keyword id="KW-0216">Detoxification</keyword>
<keyword id="KW-0903">Direct protein sequencing</keyword>
<keyword id="KW-0489">Methyltransferase</keyword>
<keyword id="KW-1185">Reference proteome</keyword>
<keyword id="KW-0949">S-adenosyl-L-methionine</keyword>
<keyword id="KW-0808">Transferase</keyword>
<evidence type="ECO:0000250" key="1"/>
<evidence type="ECO:0000269" key="2">
    <source>
    </source>
</evidence>
<evidence type="ECO:0000305" key="3"/>
<evidence type="ECO:0000305" key="4">
    <source>
    </source>
</evidence>
<evidence type="ECO:0007744" key="5">
    <source>
    </source>
</evidence>
<name>INMT_MOUSE</name>
<accession>P40936</accession>
<accession>Q9CZ50</accession>